<evidence type="ECO:0000255" key="1">
    <source>
        <dbReference type="HAMAP-Rule" id="MF_00909"/>
    </source>
</evidence>
<accession>P0A0S5</accession>
<accession>A1ITP3</accession>
<accession>Q51130</accession>
<name>FTSZ_NEIMA</name>
<protein>
    <recommendedName>
        <fullName evidence="1">Cell division protein FtsZ</fullName>
    </recommendedName>
</protein>
<keyword id="KW-0131">Cell cycle</keyword>
<keyword id="KW-0132">Cell division</keyword>
<keyword id="KW-0963">Cytoplasm</keyword>
<keyword id="KW-0342">GTP-binding</keyword>
<keyword id="KW-0547">Nucleotide-binding</keyword>
<keyword id="KW-0717">Septation</keyword>
<feature type="chain" id="PRO_0000114368" description="Cell division protein FtsZ">
    <location>
        <begin position="1"/>
        <end position="392"/>
    </location>
</feature>
<feature type="binding site" evidence="1">
    <location>
        <begin position="24"/>
        <end position="28"/>
    </location>
    <ligand>
        <name>GTP</name>
        <dbReference type="ChEBI" id="CHEBI:37565"/>
    </ligand>
</feature>
<feature type="binding site" evidence="1">
    <location>
        <begin position="111"/>
        <end position="113"/>
    </location>
    <ligand>
        <name>GTP</name>
        <dbReference type="ChEBI" id="CHEBI:37565"/>
    </ligand>
</feature>
<feature type="binding site" evidence="1">
    <location>
        <position position="142"/>
    </location>
    <ligand>
        <name>GTP</name>
        <dbReference type="ChEBI" id="CHEBI:37565"/>
    </ligand>
</feature>
<feature type="binding site" evidence="1">
    <location>
        <position position="145"/>
    </location>
    <ligand>
        <name>GTP</name>
        <dbReference type="ChEBI" id="CHEBI:37565"/>
    </ligand>
</feature>
<feature type="binding site" evidence="1">
    <location>
        <position position="189"/>
    </location>
    <ligand>
        <name>GTP</name>
        <dbReference type="ChEBI" id="CHEBI:37565"/>
    </ligand>
</feature>
<organism>
    <name type="scientific">Neisseria meningitidis serogroup A / serotype 4A (strain DSM 15465 / Z2491)</name>
    <dbReference type="NCBI Taxonomy" id="122587"/>
    <lineage>
        <taxon>Bacteria</taxon>
        <taxon>Pseudomonadati</taxon>
        <taxon>Pseudomonadota</taxon>
        <taxon>Betaproteobacteria</taxon>
        <taxon>Neisseriales</taxon>
        <taxon>Neisseriaceae</taxon>
        <taxon>Neisseria</taxon>
    </lineage>
</organism>
<dbReference type="EMBL" id="AL157959">
    <property type="protein sequence ID" value="CAM09160.1"/>
    <property type="molecule type" value="Genomic_DNA"/>
</dbReference>
<dbReference type="PIR" id="E81199">
    <property type="entry name" value="E81199"/>
</dbReference>
<dbReference type="RefSeq" id="WP_002212501.1">
    <property type="nucleotide sequence ID" value="NC_003116.1"/>
</dbReference>
<dbReference type="SMR" id="P0A0S5"/>
<dbReference type="EnsemblBacteria" id="CAM09160">
    <property type="protein sequence ID" value="CAM09160"/>
    <property type="gene ID" value="NMA2057"/>
</dbReference>
<dbReference type="GeneID" id="93387524"/>
<dbReference type="KEGG" id="nma:NMA2057"/>
<dbReference type="HOGENOM" id="CLU_024865_0_1_4"/>
<dbReference type="Proteomes" id="UP000000626">
    <property type="component" value="Chromosome"/>
</dbReference>
<dbReference type="GO" id="GO:0032153">
    <property type="term" value="C:cell division site"/>
    <property type="evidence" value="ECO:0007669"/>
    <property type="project" value="UniProtKB-UniRule"/>
</dbReference>
<dbReference type="GO" id="GO:0005737">
    <property type="term" value="C:cytoplasm"/>
    <property type="evidence" value="ECO:0007669"/>
    <property type="project" value="UniProtKB-SubCell"/>
</dbReference>
<dbReference type="GO" id="GO:0005525">
    <property type="term" value="F:GTP binding"/>
    <property type="evidence" value="ECO:0007669"/>
    <property type="project" value="UniProtKB-UniRule"/>
</dbReference>
<dbReference type="GO" id="GO:0003924">
    <property type="term" value="F:GTPase activity"/>
    <property type="evidence" value="ECO:0007669"/>
    <property type="project" value="UniProtKB-UniRule"/>
</dbReference>
<dbReference type="GO" id="GO:0000917">
    <property type="term" value="P:division septum assembly"/>
    <property type="evidence" value="ECO:0007669"/>
    <property type="project" value="UniProtKB-KW"/>
</dbReference>
<dbReference type="GO" id="GO:0043093">
    <property type="term" value="P:FtsZ-dependent cytokinesis"/>
    <property type="evidence" value="ECO:0007669"/>
    <property type="project" value="UniProtKB-UniRule"/>
</dbReference>
<dbReference type="GO" id="GO:0051258">
    <property type="term" value="P:protein polymerization"/>
    <property type="evidence" value="ECO:0007669"/>
    <property type="project" value="UniProtKB-UniRule"/>
</dbReference>
<dbReference type="CDD" id="cd02201">
    <property type="entry name" value="FtsZ_type1"/>
    <property type="match status" value="1"/>
</dbReference>
<dbReference type="FunFam" id="3.40.50.1440:FF:000001">
    <property type="entry name" value="Cell division protein FtsZ"/>
    <property type="match status" value="1"/>
</dbReference>
<dbReference type="Gene3D" id="3.30.1330.20">
    <property type="entry name" value="Tubulin/FtsZ, C-terminal domain"/>
    <property type="match status" value="1"/>
</dbReference>
<dbReference type="Gene3D" id="3.40.50.1440">
    <property type="entry name" value="Tubulin/FtsZ, GTPase domain"/>
    <property type="match status" value="1"/>
</dbReference>
<dbReference type="HAMAP" id="MF_00909">
    <property type="entry name" value="FtsZ"/>
    <property type="match status" value="1"/>
</dbReference>
<dbReference type="InterPro" id="IPR000158">
    <property type="entry name" value="Cell_div_FtsZ"/>
</dbReference>
<dbReference type="InterPro" id="IPR020805">
    <property type="entry name" value="Cell_div_FtsZ_CS"/>
</dbReference>
<dbReference type="InterPro" id="IPR045061">
    <property type="entry name" value="FtsZ/CetZ"/>
</dbReference>
<dbReference type="InterPro" id="IPR024757">
    <property type="entry name" value="FtsZ_C"/>
</dbReference>
<dbReference type="InterPro" id="IPR008280">
    <property type="entry name" value="Tub_FtsZ_C"/>
</dbReference>
<dbReference type="InterPro" id="IPR037103">
    <property type="entry name" value="Tubulin/FtsZ-like_C"/>
</dbReference>
<dbReference type="InterPro" id="IPR018316">
    <property type="entry name" value="Tubulin/FtsZ_2-layer-sand-dom"/>
</dbReference>
<dbReference type="InterPro" id="IPR036525">
    <property type="entry name" value="Tubulin/FtsZ_GTPase_sf"/>
</dbReference>
<dbReference type="InterPro" id="IPR003008">
    <property type="entry name" value="Tubulin_FtsZ_GTPase"/>
</dbReference>
<dbReference type="NCBIfam" id="TIGR00065">
    <property type="entry name" value="ftsZ"/>
    <property type="match status" value="1"/>
</dbReference>
<dbReference type="PANTHER" id="PTHR30314">
    <property type="entry name" value="CELL DIVISION PROTEIN FTSZ-RELATED"/>
    <property type="match status" value="1"/>
</dbReference>
<dbReference type="PANTHER" id="PTHR30314:SF3">
    <property type="entry name" value="MITOCHONDRIAL DIVISION PROTEIN FSZA"/>
    <property type="match status" value="1"/>
</dbReference>
<dbReference type="Pfam" id="PF12327">
    <property type="entry name" value="FtsZ_C"/>
    <property type="match status" value="1"/>
</dbReference>
<dbReference type="Pfam" id="PF00091">
    <property type="entry name" value="Tubulin"/>
    <property type="match status" value="1"/>
</dbReference>
<dbReference type="PRINTS" id="PR00423">
    <property type="entry name" value="CELLDVISFTSZ"/>
</dbReference>
<dbReference type="SMART" id="SM00864">
    <property type="entry name" value="Tubulin"/>
    <property type="match status" value="1"/>
</dbReference>
<dbReference type="SMART" id="SM00865">
    <property type="entry name" value="Tubulin_C"/>
    <property type="match status" value="1"/>
</dbReference>
<dbReference type="SUPFAM" id="SSF55307">
    <property type="entry name" value="Tubulin C-terminal domain-like"/>
    <property type="match status" value="1"/>
</dbReference>
<dbReference type="SUPFAM" id="SSF52490">
    <property type="entry name" value="Tubulin nucleotide-binding domain-like"/>
    <property type="match status" value="1"/>
</dbReference>
<dbReference type="PROSITE" id="PS01134">
    <property type="entry name" value="FTSZ_1"/>
    <property type="match status" value="1"/>
</dbReference>
<dbReference type="PROSITE" id="PS01135">
    <property type="entry name" value="FTSZ_2"/>
    <property type="match status" value="1"/>
</dbReference>
<proteinExistence type="inferred from homology"/>
<gene>
    <name evidence="1" type="primary">ftsZ</name>
    <name type="ordered locus">NMA2057</name>
</gene>
<comment type="function">
    <text evidence="1">Essential cell division protein that forms a contractile ring structure (Z ring) at the future cell division site. The regulation of the ring assembly controls the timing and the location of cell division. One of the functions of the FtsZ ring is to recruit other cell division proteins to the septum to produce a new cell wall between the dividing cells. Binds GTP and shows GTPase activity.</text>
</comment>
<comment type="subunit">
    <text evidence="1">Homodimer. Polymerizes to form a dynamic ring structure in a strictly GTP-dependent manner. Interacts directly with several other division proteins.</text>
</comment>
<comment type="subcellular location">
    <subcellularLocation>
        <location evidence="1">Cytoplasm</location>
    </subcellularLocation>
    <text evidence="1">Assembles at midcell at the inner surface of the cytoplasmic membrane.</text>
</comment>
<comment type="similarity">
    <text evidence="1">Belongs to the FtsZ family.</text>
</comment>
<sequence>MEFVYDVAESAVSPAVIKVIGLGGGGCNAINNMVANNVRGVEFISANTDAQSLAKNHAAKRIQLGTNLTRGLGAGANPDIGRAAAQEDREAIEEAIRGANMLFITTGMGGGTGTGSAPVVAEIAKSLGILTVAVVTRPFAYEGKRVHVAQAGLEQLKEHVDSLIIIPNDKLMTALGEDVTMREAFRAADNVLRDAVAGISEVVTCPSEIINLDFADVKTVMSNRGIAMMGSGYAQGIDRARMATDQAISSPLLDDVTLDGARGVLVNITTAPGCLKMSELSEVMKIVNQSAHPDLECKFGAAEDETMSEDAIRITIIATGLKEKGAVDFVPAREVEAVAPSKQEQSHNVEGMIRTNRGIRTMNLTAADFDNQSVLDDFEIPAILRRQHNSDK</sequence>
<reference key="1">
    <citation type="journal article" date="2000" name="Nature">
        <title>Complete DNA sequence of a serogroup A strain of Neisseria meningitidis Z2491.</title>
        <authorList>
            <person name="Parkhill J."/>
            <person name="Achtman M."/>
            <person name="James K.D."/>
            <person name="Bentley S.D."/>
            <person name="Churcher C.M."/>
            <person name="Klee S.R."/>
            <person name="Morelli G."/>
            <person name="Basham D."/>
            <person name="Brown D."/>
            <person name="Chillingworth T."/>
            <person name="Davies R.M."/>
            <person name="Davis P."/>
            <person name="Devlin K."/>
            <person name="Feltwell T."/>
            <person name="Hamlin N."/>
            <person name="Holroyd S."/>
            <person name="Jagels K."/>
            <person name="Leather S."/>
            <person name="Moule S."/>
            <person name="Mungall K.L."/>
            <person name="Quail M.A."/>
            <person name="Rajandream M.A."/>
            <person name="Rutherford K.M."/>
            <person name="Simmonds M."/>
            <person name="Skelton J."/>
            <person name="Whitehead S."/>
            <person name="Spratt B.G."/>
            <person name="Barrell B.G."/>
        </authorList>
    </citation>
    <scope>NUCLEOTIDE SEQUENCE [LARGE SCALE GENOMIC DNA]</scope>
    <source>
        <strain>DSM 15465 / Z2491</strain>
    </source>
</reference>